<evidence type="ECO:0000250" key="1">
    <source>
        <dbReference type="UniProtKB" id="Q04432"/>
    </source>
</evidence>
<evidence type="ECO:0000250" key="2">
    <source>
        <dbReference type="UniProtKB" id="Q5AF03"/>
    </source>
</evidence>
<evidence type="ECO:0000269" key="3">
    <source>
    </source>
</evidence>
<evidence type="ECO:0000303" key="4">
    <source>
    </source>
</evidence>
<evidence type="ECO:0000305" key="5"/>
<evidence type="ECO:0000312" key="6">
    <source>
        <dbReference type="SGD" id="S000006201"/>
    </source>
</evidence>
<dbReference type="EC" id="4.2.1.130" evidence="1"/>
<dbReference type="EMBL" id="Z73636">
    <property type="protein sequence ID" value="CAA98017.1"/>
    <property type="molecule type" value="Genomic_DNA"/>
</dbReference>
<dbReference type="EMBL" id="BK006949">
    <property type="protein sequence ID" value="DAA11158.1"/>
    <property type="molecule type" value="Genomic_DNA"/>
</dbReference>
<dbReference type="PIR" id="S65313">
    <property type="entry name" value="S65313"/>
</dbReference>
<dbReference type="RefSeq" id="NP_015043.1">
    <property type="nucleotide sequence ID" value="NM_001184094.1"/>
</dbReference>
<dbReference type="SMR" id="Q08992"/>
<dbReference type="BioGRID" id="35935">
    <property type="interactions" value="157"/>
</dbReference>
<dbReference type="DIP" id="DIP-3919N"/>
<dbReference type="FunCoup" id="Q08992">
    <property type="interactions" value="106"/>
</dbReference>
<dbReference type="IntAct" id="Q08992">
    <property type="interactions" value="3"/>
</dbReference>
<dbReference type="MINT" id="Q08992"/>
<dbReference type="STRING" id="4932.YPL280W"/>
<dbReference type="MEROPS" id="C56.A03"/>
<dbReference type="MEROPS" id="C56.A04"/>
<dbReference type="PaxDb" id="4932-YPL280W"/>
<dbReference type="PeptideAtlas" id="Q08992"/>
<dbReference type="EnsemblFungi" id="YPL280W_mRNA">
    <property type="protein sequence ID" value="YPL280W"/>
    <property type="gene ID" value="YPL280W"/>
</dbReference>
<dbReference type="GeneID" id="855849"/>
<dbReference type="KEGG" id="sce:YPL280W"/>
<dbReference type="AGR" id="SGD:S000006201"/>
<dbReference type="SGD" id="S000006201">
    <property type="gene designation" value="HSP32"/>
</dbReference>
<dbReference type="VEuPathDB" id="FungiDB:YPL280W"/>
<dbReference type="eggNOG" id="ENOG502RZ3Y">
    <property type="taxonomic scope" value="Eukaryota"/>
</dbReference>
<dbReference type="GeneTree" id="ENSGT00940000176307"/>
<dbReference type="HOGENOM" id="CLU_070319_1_0_1"/>
<dbReference type="InParanoid" id="Q08992"/>
<dbReference type="OMA" id="FWVINER"/>
<dbReference type="OrthoDB" id="543156at2759"/>
<dbReference type="BioCyc" id="YEAST:G3O-34161-MONOMER"/>
<dbReference type="CD-CODE" id="E03F929F">
    <property type="entry name" value="Stress granule"/>
</dbReference>
<dbReference type="PRO" id="PR:Q08992"/>
<dbReference type="Proteomes" id="UP000002311">
    <property type="component" value="Chromosome XVI"/>
</dbReference>
<dbReference type="RNAct" id="Q08992">
    <property type="molecule type" value="protein"/>
</dbReference>
<dbReference type="GO" id="GO:0005737">
    <property type="term" value="C:cytoplasm"/>
    <property type="evidence" value="ECO:0000318"/>
    <property type="project" value="GO_Central"/>
</dbReference>
<dbReference type="GO" id="GO:0010494">
    <property type="term" value="C:cytoplasmic stress granule"/>
    <property type="evidence" value="ECO:0000314"/>
    <property type="project" value="SGD"/>
</dbReference>
<dbReference type="GO" id="GO:0000932">
    <property type="term" value="C:P-body"/>
    <property type="evidence" value="ECO:0000314"/>
    <property type="project" value="SGD"/>
</dbReference>
<dbReference type="GO" id="GO:0019172">
    <property type="term" value="F:glyoxalase III activity"/>
    <property type="evidence" value="ECO:0000318"/>
    <property type="project" value="GO_Central"/>
</dbReference>
<dbReference type="GO" id="GO:0044183">
    <property type="term" value="F:protein folding chaperone"/>
    <property type="evidence" value="ECO:0000247"/>
    <property type="project" value="SGD"/>
</dbReference>
<dbReference type="GO" id="GO:0031669">
    <property type="term" value="P:cellular response to nutrient levels"/>
    <property type="evidence" value="ECO:0000315"/>
    <property type="project" value="SGD"/>
</dbReference>
<dbReference type="GO" id="GO:0061077">
    <property type="term" value="P:chaperone-mediated protein folding"/>
    <property type="evidence" value="ECO:0000247"/>
    <property type="project" value="SGD"/>
</dbReference>
<dbReference type="GO" id="GO:0051596">
    <property type="term" value="P:methylglyoxal catabolic process"/>
    <property type="evidence" value="ECO:0000316"/>
    <property type="project" value="SGD"/>
</dbReference>
<dbReference type="GO" id="GO:0019243">
    <property type="term" value="P:methylglyoxal catabolic process to D-lactate via S-lactoyl-glutathione"/>
    <property type="evidence" value="ECO:0000318"/>
    <property type="project" value="GO_Central"/>
</dbReference>
<dbReference type="FunFam" id="3.40.50.880:FF:000051">
    <property type="entry name" value="Glutathione-independent glyoxalase HSP31"/>
    <property type="match status" value="1"/>
</dbReference>
<dbReference type="Gene3D" id="3.40.50.880">
    <property type="match status" value="1"/>
</dbReference>
<dbReference type="InterPro" id="IPR029062">
    <property type="entry name" value="Class_I_gatase-like"/>
</dbReference>
<dbReference type="InterPro" id="IPR050325">
    <property type="entry name" value="Prot/Nucl_acid_deglycase"/>
</dbReference>
<dbReference type="PANTHER" id="PTHR48094:SF11">
    <property type="entry name" value="GLUTATHIONE-INDEPENDENT GLYOXALASE HSP31-RELATED"/>
    <property type="match status" value="1"/>
</dbReference>
<dbReference type="PANTHER" id="PTHR48094">
    <property type="entry name" value="PROTEIN/NUCLEIC ACID DEGLYCASE DJ-1-RELATED"/>
    <property type="match status" value="1"/>
</dbReference>
<dbReference type="SUPFAM" id="SSF52317">
    <property type="entry name" value="Class I glutamine amidotransferase-like"/>
    <property type="match status" value="1"/>
</dbReference>
<reference key="1">
    <citation type="journal article" date="1997" name="Nature">
        <title>The nucleotide sequence of Saccharomyces cerevisiae chromosome XVI.</title>
        <authorList>
            <person name="Bussey H."/>
            <person name="Storms R.K."/>
            <person name="Ahmed A."/>
            <person name="Albermann K."/>
            <person name="Allen E."/>
            <person name="Ansorge W."/>
            <person name="Araujo R."/>
            <person name="Aparicio A."/>
            <person name="Barrell B.G."/>
            <person name="Badcock K."/>
            <person name="Benes V."/>
            <person name="Botstein D."/>
            <person name="Bowman S."/>
            <person name="Brueckner M."/>
            <person name="Carpenter J."/>
            <person name="Cherry J.M."/>
            <person name="Chung E."/>
            <person name="Churcher C.M."/>
            <person name="Coster F."/>
            <person name="Davis K."/>
            <person name="Davis R.W."/>
            <person name="Dietrich F.S."/>
            <person name="Delius H."/>
            <person name="DiPaolo T."/>
            <person name="Dubois E."/>
            <person name="Duesterhoeft A."/>
            <person name="Duncan M."/>
            <person name="Floeth M."/>
            <person name="Fortin N."/>
            <person name="Friesen J.D."/>
            <person name="Fritz C."/>
            <person name="Goffeau A."/>
            <person name="Hall J."/>
            <person name="Hebling U."/>
            <person name="Heumann K."/>
            <person name="Hilbert H."/>
            <person name="Hillier L.W."/>
            <person name="Hunicke-Smith S."/>
            <person name="Hyman R.W."/>
            <person name="Johnston M."/>
            <person name="Kalman S."/>
            <person name="Kleine K."/>
            <person name="Komp C."/>
            <person name="Kurdi O."/>
            <person name="Lashkari D."/>
            <person name="Lew H."/>
            <person name="Lin A."/>
            <person name="Lin D."/>
            <person name="Louis E.J."/>
            <person name="Marathe R."/>
            <person name="Messenguy F."/>
            <person name="Mewes H.-W."/>
            <person name="Mirtipati S."/>
            <person name="Moestl D."/>
            <person name="Mueller-Auer S."/>
            <person name="Namath A."/>
            <person name="Nentwich U."/>
            <person name="Oefner P."/>
            <person name="Pearson D."/>
            <person name="Petel F.X."/>
            <person name="Pohl T.M."/>
            <person name="Purnelle B."/>
            <person name="Rajandream M.A."/>
            <person name="Rechmann S."/>
            <person name="Rieger M."/>
            <person name="Riles L."/>
            <person name="Roberts D."/>
            <person name="Schaefer M."/>
            <person name="Scharfe M."/>
            <person name="Scherens B."/>
            <person name="Schramm S."/>
            <person name="Schroeder M."/>
            <person name="Sdicu A.-M."/>
            <person name="Tettelin H."/>
            <person name="Urrestarazu L.A."/>
            <person name="Ushinsky S."/>
            <person name="Vierendeels F."/>
            <person name="Vissers S."/>
            <person name="Voss H."/>
            <person name="Walsh S.V."/>
            <person name="Wambutt R."/>
            <person name="Wang Y."/>
            <person name="Wedler E."/>
            <person name="Wedler H."/>
            <person name="Winnett E."/>
            <person name="Zhong W.-W."/>
            <person name="Zollner A."/>
            <person name="Vo D.H."/>
            <person name="Hani J."/>
        </authorList>
    </citation>
    <scope>NUCLEOTIDE SEQUENCE [LARGE SCALE GENOMIC DNA]</scope>
    <source>
        <strain>ATCC 204508 / S288c</strain>
    </source>
</reference>
<reference key="2">
    <citation type="journal article" date="2014" name="G3 (Bethesda)">
        <title>The reference genome sequence of Saccharomyces cerevisiae: Then and now.</title>
        <authorList>
            <person name="Engel S.R."/>
            <person name="Dietrich F.S."/>
            <person name="Fisk D.G."/>
            <person name="Binkley G."/>
            <person name="Balakrishnan R."/>
            <person name="Costanzo M.C."/>
            <person name="Dwight S.S."/>
            <person name="Hitz B.C."/>
            <person name="Karra K."/>
            <person name="Nash R.S."/>
            <person name="Weng S."/>
            <person name="Wong E.D."/>
            <person name="Lloyd P."/>
            <person name="Skrzypek M.S."/>
            <person name="Miyasato S.R."/>
            <person name="Simison M."/>
            <person name="Cherry J.M."/>
        </authorList>
    </citation>
    <scope>GENOME REANNOTATION</scope>
    <source>
        <strain>ATCC 204508 / S288c</strain>
    </source>
</reference>
<reference key="3">
    <citation type="journal article" date="2004" name="Proc. Natl. Acad. Sci. U.S.A.">
        <title>The 1.8-A resolution crystal structure of YDR533Cp from Saccharomyces cerevisiae: a member of the DJ-1/ThiJ/PfpI superfamily.</title>
        <authorList>
            <person name="Wilson M.A."/>
            <person name="St Amour C.V."/>
            <person name="Collins J.L."/>
            <person name="Ringe D."/>
            <person name="Petsko G.A."/>
        </authorList>
    </citation>
    <scope>GENE NAME</scope>
</reference>
<reference key="4">
    <citation type="journal article" date="2014" name="Proc. Natl. Acad. Sci. U.S.A.">
        <title>Yeast DJ-1 superfamily members are required for diauxic-shift reprogramming and cell survival in stationary phase.</title>
        <authorList>
            <person name="Miller-Fleming L."/>
            <person name="Antas P."/>
            <person name="Pais T.F."/>
            <person name="Smalley J.L."/>
            <person name="Giorgini F."/>
            <person name="Outeiro T.F."/>
        </authorList>
    </citation>
    <scope>INDUCTION</scope>
    <scope>DISRUPTION PHENOTYPE</scope>
    <scope>SUBCELLULAR LOCATION</scope>
</reference>
<feature type="chain" id="PRO_0000270555" description="Probable glutathione-independent glyoxalase HSP32">
    <location>
        <begin position="1"/>
        <end position="237"/>
    </location>
</feature>
<feature type="active site" evidence="1">
    <location>
        <position position="138"/>
    </location>
</feature>
<feature type="active site" evidence="1">
    <location>
        <position position="139"/>
    </location>
</feature>
<feature type="active site" evidence="1">
    <location>
        <position position="170"/>
    </location>
</feature>
<sequence>MTPKRALISLTSYHGPFYKDGAKTGVFVVEILRSFDTFEKHGFEVDFVSETGGFGWDEHYLPKSFIGGEDKMNFETKNSAFNKALARIKTANEVNASDYKIFFASAGHGALFDYPKAKNLQDIASKIYANGGVIAAICHGPLLFDGLIDIKTTRPLIEGKAITGFPLEGEIALGVDDILRSRKLTTVERVANKNGAKYLAPIHPWDDYSITDGKLVTGVNANSSYSTTIRAINALYS</sequence>
<comment type="function">
    <text evidence="1 3">Catalyzes the conversion of methylglyoxal (MG) to D-lactate in a single glutathione (GSH)-independent step. May play a role in detoxifying endogenously produced glyoxals. Involved in protection against reactive oxygen species (ROS) (By similarity). Important for viability in stationary phase. May negatively regulate TORC1 in response to nutrient limitation (PubMed:24706893).</text>
</comment>
<comment type="catalytic activity">
    <reaction evidence="1">
        <text>methylglyoxal + H2O = (R)-lactate + H(+)</text>
        <dbReference type="Rhea" id="RHEA:27754"/>
        <dbReference type="ChEBI" id="CHEBI:15377"/>
        <dbReference type="ChEBI" id="CHEBI:15378"/>
        <dbReference type="ChEBI" id="CHEBI:16004"/>
        <dbReference type="ChEBI" id="CHEBI:17158"/>
        <dbReference type="EC" id="4.2.1.130"/>
    </reaction>
</comment>
<comment type="subunit">
    <text evidence="1">Homodimer.</text>
</comment>
<comment type="subcellular location">
    <subcellularLocation>
        <location evidence="3">Cytoplasm</location>
        <location evidence="3">P-body</location>
    </subcellularLocation>
    <text evidence="3">Present in processing bodies (P-bodies) and stress granule (SG) foci upon glucose starvation and heat shock.</text>
</comment>
<comment type="induction">
    <text evidence="3">Induced during entry into stationary phase.</text>
</comment>
<comment type="disruption phenotype">
    <text evidence="3">Results in higher sensitivity to oxidative stress, reduced thermotolerance, accumulation of higher levels of reactive oxygen species, and reduced chronological life span.</text>
</comment>
<comment type="similarity">
    <text evidence="5">Belongs to the peptidase C56 family. HSP31-like subfamily.</text>
</comment>
<protein>
    <recommendedName>
        <fullName evidence="1">Probable glutathione-independent glyoxalase HSP32</fullName>
        <ecNumber evidence="1">4.2.1.130</ecNumber>
    </recommendedName>
    <alternativeName>
        <fullName evidence="2">Glyoxalase 3 homolog 2</fullName>
    </alternativeName>
    <alternativeName>
        <fullName evidence="4">Heat shock protein 32</fullName>
    </alternativeName>
</protein>
<name>HSP32_YEAST</name>
<proteinExistence type="evidence at transcript level"/>
<gene>
    <name evidence="4" type="primary">HSP32</name>
    <name evidence="6" type="ordered locus">YPL280W</name>
</gene>
<accession>Q08992</accession>
<accession>D6W392</accession>
<organism>
    <name type="scientific">Saccharomyces cerevisiae (strain ATCC 204508 / S288c)</name>
    <name type="common">Baker's yeast</name>
    <dbReference type="NCBI Taxonomy" id="559292"/>
    <lineage>
        <taxon>Eukaryota</taxon>
        <taxon>Fungi</taxon>
        <taxon>Dikarya</taxon>
        <taxon>Ascomycota</taxon>
        <taxon>Saccharomycotina</taxon>
        <taxon>Saccharomycetes</taxon>
        <taxon>Saccharomycetales</taxon>
        <taxon>Saccharomycetaceae</taxon>
        <taxon>Saccharomyces</taxon>
    </lineage>
</organism>
<keyword id="KW-0963">Cytoplasm</keyword>
<keyword id="KW-0456">Lyase</keyword>
<keyword id="KW-1185">Reference proteome</keyword>
<keyword id="KW-0346">Stress response</keyword>